<gene>
    <name evidence="1" type="primary">leuC2</name>
    <name type="ordered locus">TM_0554</name>
</gene>
<name>LEUC2_THEMA</name>
<protein>
    <recommendedName>
        <fullName evidence="1">3-isopropylmalate dehydratase large subunit 2</fullName>
        <ecNumber evidence="1">4.2.1.33</ecNumber>
    </recommendedName>
    <alternativeName>
        <fullName evidence="1">Alpha-IPM isomerase 2</fullName>
        <shortName evidence="1">IPMI 2</shortName>
    </alternativeName>
    <alternativeName>
        <fullName evidence="1">Isopropylmalate isomerase 2</fullName>
    </alternativeName>
</protein>
<dbReference type="EC" id="4.2.1.33" evidence="1"/>
<dbReference type="EMBL" id="AE000512">
    <property type="protein sequence ID" value="AAD35639.1"/>
    <property type="molecule type" value="Genomic_DNA"/>
</dbReference>
<dbReference type="PIR" id="H72362">
    <property type="entry name" value="H72362"/>
</dbReference>
<dbReference type="RefSeq" id="NP_228364.1">
    <property type="nucleotide sequence ID" value="NC_000853.1"/>
</dbReference>
<dbReference type="SMR" id="Q9WZ24"/>
<dbReference type="FunCoup" id="Q9WZ24">
    <property type="interactions" value="352"/>
</dbReference>
<dbReference type="STRING" id="243274.TM_0554"/>
<dbReference type="PaxDb" id="243274-THEMA_01905"/>
<dbReference type="EnsemblBacteria" id="AAD35639">
    <property type="protein sequence ID" value="AAD35639"/>
    <property type="gene ID" value="TM_0554"/>
</dbReference>
<dbReference type="KEGG" id="tma:TM0554"/>
<dbReference type="KEGG" id="tmi:THEMA_01905"/>
<dbReference type="KEGG" id="tmm:Tmari_0551"/>
<dbReference type="KEGG" id="tmw:THMA_0567"/>
<dbReference type="eggNOG" id="COG0065">
    <property type="taxonomic scope" value="Bacteria"/>
</dbReference>
<dbReference type="InParanoid" id="Q9WZ24"/>
<dbReference type="OrthoDB" id="9802769at2"/>
<dbReference type="UniPathway" id="UPA00048">
    <property type="reaction ID" value="UER00071"/>
</dbReference>
<dbReference type="Proteomes" id="UP000008183">
    <property type="component" value="Chromosome"/>
</dbReference>
<dbReference type="GO" id="GO:0003861">
    <property type="term" value="F:3-isopropylmalate dehydratase activity"/>
    <property type="evidence" value="ECO:0007669"/>
    <property type="project" value="UniProtKB-UniRule"/>
</dbReference>
<dbReference type="GO" id="GO:0051539">
    <property type="term" value="F:4 iron, 4 sulfur cluster binding"/>
    <property type="evidence" value="ECO:0007669"/>
    <property type="project" value="UniProtKB-KW"/>
</dbReference>
<dbReference type="GO" id="GO:0046872">
    <property type="term" value="F:metal ion binding"/>
    <property type="evidence" value="ECO:0007669"/>
    <property type="project" value="UniProtKB-KW"/>
</dbReference>
<dbReference type="GO" id="GO:0009098">
    <property type="term" value="P:L-leucine biosynthetic process"/>
    <property type="evidence" value="ECO:0007669"/>
    <property type="project" value="UniProtKB-UniRule"/>
</dbReference>
<dbReference type="CDD" id="cd01583">
    <property type="entry name" value="IPMI"/>
    <property type="match status" value="1"/>
</dbReference>
<dbReference type="Gene3D" id="3.30.499.10">
    <property type="entry name" value="Aconitase, domain 3"/>
    <property type="match status" value="2"/>
</dbReference>
<dbReference type="HAMAP" id="MF_01027">
    <property type="entry name" value="LeuC_type2"/>
    <property type="match status" value="1"/>
</dbReference>
<dbReference type="InterPro" id="IPR015931">
    <property type="entry name" value="Acnase/IPM_dHydase_lsu_aba_1/3"/>
</dbReference>
<dbReference type="InterPro" id="IPR001030">
    <property type="entry name" value="Acoase/IPM_deHydtase_lsu_aba"/>
</dbReference>
<dbReference type="InterPro" id="IPR018136">
    <property type="entry name" value="Aconitase_4Fe-4S_BS"/>
</dbReference>
<dbReference type="InterPro" id="IPR036008">
    <property type="entry name" value="Aconitase_4Fe-4S_dom"/>
</dbReference>
<dbReference type="InterPro" id="IPR011826">
    <property type="entry name" value="HAcnase/IPMdehydase_lsu_prok"/>
</dbReference>
<dbReference type="InterPro" id="IPR006251">
    <property type="entry name" value="Homoacnase/IPMdehydase_lsu"/>
</dbReference>
<dbReference type="InterPro" id="IPR050067">
    <property type="entry name" value="IPM_dehydratase_rel_enz"/>
</dbReference>
<dbReference type="InterPro" id="IPR033941">
    <property type="entry name" value="IPMI_cat"/>
</dbReference>
<dbReference type="InterPro" id="IPR011823">
    <property type="entry name" value="IsopropMal_deHydtase_lsu_bac"/>
</dbReference>
<dbReference type="NCBIfam" id="TIGR01343">
    <property type="entry name" value="hacA_fam"/>
    <property type="match status" value="1"/>
</dbReference>
<dbReference type="NCBIfam" id="TIGR02086">
    <property type="entry name" value="IPMI_arch"/>
    <property type="match status" value="1"/>
</dbReference>
<dbReference type="NCBIfam" id="TIGR02083">
    <property type="entry name" value="LEU2"/>
    <property type="match status" value="1"/>
</dbReference>
<dbReference type="NCBIfam" id="NF001614">
    <property type="entry name" value="PRK00402.1"/>
    <property type="match status" value="1"/>
</dbReference>
<dbReference type="PANTHER" id="PTHR43822:SF16">
    <property type="entry name" value="3-ISOPROPYLMALATE DEHYDRATASE LARGE SUBUNIT 2"/>
    <property type="match status" value="1"/>
</dbReference>
<dbReference type="PANTHER" id="PTHR43822">
    <property type="entry name" value="HOMOACONITASE, MITOCHONDRIAL-RELATED"/>
    <property type="match status" value="1"/>
</dbReference>
<dbReference type="Pfam" id="PF00330">
    <property type="entry name" value="Aconitase"/>
    <property type="match status" value="1"/>
</dbReference>
<dbReference type="PRINTS" id="PR00415">
    <property type="entry name" value="ACONITASE"/>
</dbReference>
<dbReference type="SUPFAM" id="SSF53732">
    <property type="entry name" value="Aconitase iron-sulfur domain"/>
    <property type="match status" value="1"/>
</dbReference>
<dbReference type="PROSITE" id="PS00450">
    <property type="entry name" value="ACONITASE_1"/>
    <property type="match status" value="1"/>
</dbReference>
<dbReference type="PROSITE" id="PS01244">
    <property type="entry name" value="ACONITASE_2"/>
    <property type="match status" value="1"/>
</dbReference>
<keyword id="KW-0004">4Fe-4S</keyword>
<keyword id="KW-0028">Amino-acid biosynthesis</keyword>
<keyword id="KW-0100">Branched-chain amino acid biosynthesis</keyword>
<keyword id="KW-0408">Iron</keyword>
<keyword id="KW-0411">Iron-sulfur</keyword>
<keyword id="KW-0432">Leucine biosynthesis</keyword>
<keyword id="KW-0456">Lyase</keyword>
<keyword id="KW-0479">Metal-binding</keyword>
<keyword id="KW-1185">Reference proteome</keyword>
<comment type="function">
    <text evidence="1">Catalyzes the isomerization between 2-isopropylmalate and 3-isopropylmalate, via the formation of 2-isopropylmaleate.</text>
</comment>
<comment type="catalytic activity">
    <reaction evidence="1">
        <text>(2R,3S)-3-isopropylmalate = (2S)-2-isopropylmalate</text>
        <dbReference type="Rhea" id="RHEA:32287"/>
        <dbReference type="ChEBI" id="CHEBI:1178"/>
        <dbReference type="ChEBI" id="CHEBI:35121"/>
        <dbReference type="EC" id="4.2.1.33"/>
    </reaction>
</comment>
<comment type="cofactor">
    <cofactor evidence="1">
        <name>[4Fe-4S] cluster</name>
        <dbReference type="ChEBI" id="CHEBI:49883"/>
    </cofactor>
    <text evidence="1">Binds 1 [4Fe-4S] cluster per subunit.</text>
</comment>
<comment type="pathway">
    <text evidence="1">Amino-acid biosynthesis; L-leucine biosynthesis; L-leucine from 3-methyl-2-oxobutanoate: step 2/4.</text>
</comment>
<comment type="subunit">
    <text evidence="1">Heterodimer of LeuC and LeuD.</text>
</comment>
<comment type="similarity">
    <text evidence="1">Belongs to the aconitase/IPM isomerase family. LeuC type 2 subfamily.</text>
</comment>
<sequence>MTLAEKILSQKAGRKVEPGEFLLLEPDIALANDITAPLAIKKFKEYGGKKVKYPDRVVLVPDHFTPNKDIKSAMQVKMMREFAREQGIEKFFEIGRMGIEHVLLPEEGIVKSGDLVVGADSHTCTYGALGAFATGVGSTDIAGFYLIGKVWFRVPESIKVTLRGKFKDLVTAKDLVLKLISILGVDGANYKAIEFSGPGVKEISMDGRFTISNMAIEAGGKTGLFPVDEITIAYERERGIEVEEMYPDEDAKYVREVEMDLSELEPQVAYPFLPSNAKDVSEAEKERIKIDQAVIGSCTNGRIEDLRLAAQILKGRTVSPDVRCIIIPGSQKVYKQALKEGLIDIFIDAGCAVSTPTCGPCLGGHMGVLAEGEVAISTTNRNFVGRMGHPNSKVFLASPAVAAASAIKGYIADPRKL</sequence>
<evidence type="ECO:0000255" key="1">
    <source>
        <dbReference type="HAMAP-Rule" id="MF_01027"/>
    </source>
</evidence>
<reference key="1">
    <citation type="journal article" date="1999" name="Nature">
        <title>Evidence for lateral gene transfer between Archaea and Bacteria from genome sequence of Thermotoga maritima.</title>
        <authorList>
            <person name="Nelson K.E."/>
            <person name="Clayton R.A."/>
            <person name="Gill S.R."/>
            <person name="Gwinn M.L."/>
            <person name="Dodson R.J."/>
            <person name="Haft D.H."/>
            <person name="Hickey E.K."/>
            <person name="Peterson J.D."/>
            <person name="Nelson W.C."/>
            <person name="Ketchum K.A."/>
            <person name="McDonald L.A."/>
            <person name="Utterback T.R."/>
            <person name="Malek J.A."/>
            <person name="Linher K.D."/>
            <person name="Garrett M.M."/>
            <person name="Stewart A.M."/>
            <person name="Cotton M.D."/>
            <person name="Pratt M.S."/>
            <person name="Phillips C.A."/>
            <person name="Richardson D.L."/>
            <person name="Heidelberg J.F."/>
            <person name="Sutton G.G."/>
            <person name="Fleischmann R.D."/>
            <person name="Eisen J.A."/>
            <person name="White O."/>
            <person name="Salzberg S.L."/>
            <person name="Smith H.O."/>
            <person name="Venter J.C."/>
            <person name="Fraser C.M."/>
        </authorList>
    </citation>
    <scope>NUCLEOTIDE SEQUENCE [LARGE SCALE GENOMIC DNA]</scope>
    <source>
        <strain>ATCC 43589 / DSM 3109 / JCM 10099 / NBRC 100826 / MSB8</strain>
    </source>
</reference>
<feature type="chain" id="PRO_0000076861" description="3-isopropylmalate dehydratase large subunit 2">
    <location>
        <begin position="1"/>
        <end position="417"/>
    </location>
</feature>
<feature type="binding site" evidence="1">
    <location>
        <position position="298"/>
    </location>
    <ligand>
        <name>[4Fe-4S] cluster</name>
        <dbReference type="ChEBI" id="CHEBI:49883"/>
    </ligand>
</feature>
<feature type="binding site" evidence="1">
    <location>
        <position position="358"/>
    </location>
    <ligand>
        <name>[4Fe-4S] cluster</name>
        <dbReference type="ChEBI" id="CHEBI:49883"/>
    </ligand>
</feature>
<feature type="binding site" evidence="1">
    <location>
        <position position="361"/>
    </location>
    <ligand>
        <name>[4Fe-4S] cluster</name>
        <dbReference type="ChEBI" id="CHEBI:49883"/>
    </ligand>
</feature>
<proteinExistence type="inferred from homology"/>
<accession>Q9WZ24</accession>
<organism>
    <name type="scientific">Thermotoga maritima (strain ATCC 43589 / DSM 3109 / JCM 10099 / NBRC 100826 / MSB8)</name>
    <dbReference type="NCBI Taxonomy" id="243274"/>
    <lineage>
        <taxon>Bacteria</taxon>
        <taxon>Thermotogati</taxon>
        <taxon>Thermotogota</taxon>
        <taxon>Thermotogae</taxon>
        <taxon>Thermotogales</taxon>
        <taxon>Thermotogaceae</taxon>
        <taxon>Thermotoga</taxon>
    </lineage>
</organism>